<organism>
    <name type="scientific">Clostridium novyi (strain NT)</name>
    <dbReference type="NCBI Taxonomy" id="386415"/>
    <lineage>
        <taxon>Bacteria</taxon>
        <taxon>Bacillati</taxon>
        <taxon>Bacillota</taxon>
        <taxon>Clostridia</taxon>
        <taxon>Eubacteriales</taxon>
        <taxon>Clostridiaceae</taxon>
        <taxon>Clostridium</taxon>
    </lineage>
</organism>
<accession>A0PXT9</accession>
<comment type="function">
    <text evidence="1">DNA-dependent RNA polymerase catalyzes the transcription of DNA into RNA using the four ribonucleoside triphosphates as substrates.</text>
</comment>
<comment type="catalytic activity">
    <reaction evidence="1">
        <text>RNA(n) + a ribonucleoside 5'-triphosphate = RNA(n+1) + diphosphate</text>
        <dbReference type="Rhea" id="RHEA:21248"/>
        <dbReference type="Rhea" id="RHEA-COMP:14527"/>
        <dbReference type="Rhea" id="RHEA-COMP:17342"/>
        <dbReference type="ChEBI" id="CHEBI:33019"/>
        <dbReference type="ChEBI" id="CHEBI:61557"/>
        <dbReference type="ChEBI" id="CHEBI:140395"/>
        <dbReference type="EC" id="2.7.7.6"/>
    </reaction>
</comment>
<comment type="cofactor">
    <cofactor evidence="1">
        <name>Mg(2+)</name>
        <dbReference type="ChEBI" id="CHEBI:18420"/>
    </cofactor>
    <text evidence="1">Binds 1 Mg(2+) ion per subunit.</text>
</comment>
<comment type="cofactor">
    <cofactor evidence="1">
        <name>Zn(2+)</name>
        <dbReference type="ChEBI" id="CHEBI:29105"/>
    </cofactor>
    <text evidence="1">Binds 2 Zn(2+) ions per subunit.</text>
</comment>
<comment type="subunit">
    <text evidence="1">The RNAP catalytic core consists of 2 alpha, 1 beta, 1 beta' and 1 omega subunit. When a sigma factor is associated with the core the holoenzyme is formed, which can initiate transcription.</text>
</comment>
<comment type="similarity">
    <text evidence="1">Belongs to the RNA polymerase beta' chain family.</text>
</comment>
<name>RPOC_CLONN</name>
<feature type="chain" id="PRO_0000353337" description="DNA-directed RNA polymerase subunit beta'">
    <location>
        <begin position="1"/>
        <end position="1185"/>
    </location>
</feature>
<feature type="binding site" evidence="1">
    <location>
        <position position="67"/>
    </location>
    <ligand>
        <name>Zn(2+)</name>
        <dbReference type="ChEBI" id="CHEBI:29105"/>
        <label>1</label>
    </ligand>
</feature>
<feature type="binding site" evidence="1">
    <location>
        <position position="69"/>
    </location>
    <ligand>
        <name>Zn(2+)</name>
        <dbReference type="ChEBI" id="CHEBI:29105"/>
        <label>1</label>
    </ligand>
</feature>
<feature type="binding site" evidence="1">
    <location>
        <position position="82"/>
    </location>
    <ligand>
        <name>Zn(2+)</name>
        <dbReference type="ChEBI" id="CHEBI:29105"/>
        <label>1</label>
    </ligand>
</feature>
<feature type="binding site" evidence="1">
    <location>
        <position position="85"/>
    </location>
    <ligand>
        <name>Zn(2+)</name>
        <dbReference type="ChEBI" id="CHEBI:29105"/>
        <label>1</label>
    </ligand>
</feature>
<feature type="binding site" evidence="1">
    <location>
        <position position="457"/>
    </location>
    <ligand>
        <name>Mg(2+)</name>
        <dbReference type="ChEBI" id="CHEBI:18420"/>
    </ligand>
</feature>
<feature type="binding site" evidence="1">
    <location>
        <position position="459"/>
    </location>
    <ligand>
        <name>Mg(2+)</name>
        <dbReference type="ChEBI" id="CHEBI:18420"/>
    </ligand>
</feature>
<feature type="binding site" evidence="1">
    <location>
        <position position="461"/>
    </location>
    <ligand>
        <name>Mg(2+)</name>
        <dbReference type="ChEBI" id="CHEBI:18420"/>
    </ligand>
</feature>
<feature type="binding site" evidence="1">
    <location>
        <position position="802"/>
    </location>
    <ligand>
        <name>Zn(2+)</name>
        <dbReference type="ChEBI" id="CHEBI:29105"/>
        <label>2</label>
    </ligand>
</feature>
<feature type="binding site" evidence="1">
    <location>
        <position position="876"/>
    </location>
    <ligand>
        <name>Zn(2+)</name>
        <dbReference type="ChEBI" id="CHEBI:29105"/>
        <label>2</label>
    </ligand>
</feature>
<feature type="binding site" evidence="1">
    <location>
        <position position="883"/>
    </location>
    <ligand>
        <name>Zn(2+)</name>
        <dbReference type="ChEBI" id="CHEBI:29105"/>
        <label>2</label>
    </ligand>
</feature>
<feature type="binding site" evidence="1">
    <location>
        <position position="886"/>
    </location>
    <ligand>
        <name>Zn(2+)</name>
        <dbReference type="ChEBI" id="CHEBI:29105"/>
        <label>2</label>
    </ligand>
</feature>
<reference key="1">
    <citation type="journal article" date="2006" name="Nat. Biotechnol.">
        <title>The genome and transcriptomes of the anti-tumor agent Clostridium novyi-NT.</title>
        <authorList>
            <person name="Bettegowda C."/>
            <person name="Huang X."/>
            <person name="Lin J."/>
            <person name="Cheong I."/>
            <person name="Kohli M."/>
            <person name="Szabo S.A."/>
            <person name="Zhang X."/>
            <person name="Diaz L.A. Jr."/>
            <person name="Velculescu V.E."/>
            <person name="Parmigiani G."/>
            <person name="Kinzler K.W."/>
            <person name="Vogelstein B."/>
            <person name="Zhou S."/>
        </authorList>
    </citation>
    <scope>NUCLEOTIDE SEQUENCE [LARGE SCALE GENOMIC DNA]</scope>
    <source>
        <strain>NT</strain>
    </source>
</reference>
<keyword id="KW-0240">DNA-directed RNA polymerase</keyword>
<keyword id="KW-0460">Magnesium</keyword>
<keyword id="KW-0479">Metal-binding</keyword>
<keyword id="KW-0548">Nucleotidyltransferase</keyword>
<keyword id="KW-1185">Reference proteome</keyword>
<keyword id="KW-0804">Transcription</keyword>
<keyword id="KW-0808">Transferase</keyword>
<keyword id="KW-0862">Zinc</keyword>
<proteinExistence type="inferred from homology"/>
<protein>
    <recommendedName>
        <fullName evidence="1">DNA-directed RNA polymerase subunit beta'</fullName>
        <shortName evidence="1">RNAP subunit beta'</shortName>
        <ecNumber evidence="1">2.7.7.6</ecNumber>
    </recommendedName>
    <alternativeName>
        <fullName evidence="1">RNA polymerase subunit beta'</fullName>
    </alternativeName>
    <alternativeName>
        <fullName evidence="1">Transcriptase subunit beta'</fullName>
    </alternativeName>
</protein>
<gene>
    <name evidence="1" type="primary">rpoC</name>
    <name type="ordered locus">NT01CX_1108</name>
</gene>
<evidence type="ECO:0000255" key="1">
    <source>
        <dbReference type="HAMAP-Rule" id="MF_01322"/>
    </source>
</evidence>
<dbReference type="EC" id="2.7.7.6" evidence="1"/>
<dbReference type="EMBL" id="CP000382">
    <property type="protein sequence ID" value="ABK62005.1"/>
    <property type="molecule type" value="Genomic_DNA"/>
</dbReference>
<dbReference type="SMR" id="A0PXT9"/>
<dbReference type="STRING" id="386415.NT01CX_1108"/>
<dbReference type="KEGG" id="cno:NT01CX_1108"/>
<dbReference type="eggNOG" id="COG0086">
    <property type="taxonomic scope" value="Bacteria"/>
</dbReference>
<dbReference type="HOGENOM" id="CLU_000524_3_1_9"/>
<dbReference type="Proteomes" id="UP000008220">
    <property type="component" value="Chromosome"/>
</dbReference>
<dbReference type="GO" id="GO:0000428">
    <property type="term" value="C:DNA-directed RNA polymerase complex"/>
    <property type="evidence" value="ECO:0007669"/>
    <property type="project" value="UniProtKB-KW"/>
</dbReference>
<dbReference type="GO" id="GO:0003677">
    <property type="term" value="F:DNA binding"/>
    <property type="evidence" value="ECO:0007669"/>
    <property type="project" value="UniProtKB-UniRule"/>
</dbReference>
<dbReference type="GO" id="GO:0003899">
    <property type="term" value="F:DNA-directed RNA polymerase activity"/>
    <property type="evidence" value="ECO:0007669"/>
    <property type="project" value="UniProtKB-UniRule"/>
</dbReference>
<dbReference type="GO" id="GO:0000287">
    <property type="term" value="F:magnesium ion binding"/>
    <property type="evidence" value="ECO:0007669"/>
    <property type="project" value="UniProtKB-UniRule"/>
</dbReference>
<dbReference type="GO" id="GO:0008270">
    <property type="term" value="F:zinc ion binding"/>
    <property type="evidence" value="ECO:0007669"/>
    <property type="project" value="UniProtKB-UniRule"/>
</dbReference>
<dbReference type="GO" id="GO:0006351">
    <property type="term" value="P:DNA-templated transcription"/>
    <property type="evidence" value="ECO:0007669"/>
    <property type="project" value="UniProtKB-UniRule"/>
</dbReference>
<dbReference type="CDD" id="cd02655">
    <property type="entry name" value="RNAP_beta'_C"/>
    <property type="match status" value="1"/>
</dbReference>
<dbReference type="CDD" id="cd01609">
    <property type="entry name" value="RNAP_beta'_N"/>
    <property type="match status" value="1"/>
</dbReference>
<dbReference type="FunFam" id="1.10.150.390:FF:000002">
    <property type="entry name" value="DNA-directed RNA polymerase subunit beta"/>
    <property type="match status" value="1"/>
</dbReference>
<dbReference type="FunFam" id="4.10.860.120:FF:000001">
    <property type="entry name" value="DNA-directed RNA polymerase subunit beta"/>
    <property type="match status" value="1"/>
</dbReference>
<dbReference type="Gene3D" id="1.10.132.30">
    <property type="match status" value="1"/>
</dbReference>
<dbReference type="Gene3D" id="1.10.150.390">
    <property type="match status" value="1"/>
</dbReference>
<dbReference type="Gene3D" id="1.10.1790.20">
    <property type="match status" value="1"/>
</dbReference>
<dbReference type="Gene3D" id="1.10.40.90">
    <property type="match status" value="1"/>
</dbReference>
<dbReference type="Gene3D" id="2.40.40.20">
    <property type="match status" value="1"/>
</dbReference>
<dbReference type="Gene3D" id="2.40.50.100">
    <property type="match status" value="1"/>
</dbReference>
<dbReference type="Gene3D" id="4.10.860.120">
    <property type="entry name" value="RNA polymerase II, clamp domain"/>
    <property type="match status" value="1"/>
</dbReference>
<dbReference type="Gene3D" id="1.10.274.100">
    <property type="entry name" value="RNA polymerase Rpb1, domain 3"/>
    <property type="match status" value="2"/>
</dbReference>
<dbReference type="HAMAP" id="MF_01322">
    <property type="entry name" value="RNApol_bact_RpoC"/>
    <property type="match status" value="1"/>
</dbReference>
<dbReference type="InterPro" id="IPR045867">
    <property type="entry name" value="DNA-dir_RpoC_beta_prime"/>
</dbReference>
<dbReference type="InterPro" id="IPR012754">
    <property type="entry name" value="DNA-dir_RpoC_beta_prime_bact"/>
</dbReference>
<dbReference type="InterPro" id="IPR000722">
    <property type="entry name" value="RNA_pol_asu"/>
</dbReference>
<dbReference type="InterPro" id="IPR006592">
    <property type="entry name" value="RNA_pol_N"/>
</dbReference>
<dbReference type="InterPro" id="IPR007080">
    <property type="entry name" value="RNA_pol_Rpb1_1"/>
</dbReference>
<dbReference type="InterPro" id="IPR007066">
    <property type="entry name" value="RNA_pol_Rpb1_3"/>
</dbReference>
<dbReference type="InterPro" id="IPR042102">
    <property type="entry name" value="RNA_pol_Rpb1_3_sf"/>
</dbReference>
<dbReference type="InterPro" id="IPR007083">
    <property type="entry name" value="RNA_pol_Rpb1_4"/>
</dbReference>
<dbReference type="InterPro" id="IPR007081">
    <property type="entry name" value="RNA_pol_Rpb1_5"/>
</dbReference>
<dbReference type="InterPro" id="IPR044893">
    <property type="entry name" value="RNA_pol_Rpb1_clamp_domain"/>
</dbReference>
<dbReference type="InterPro" id="IPR038120">
    <property type="entry name" value="Rpb1_funnel_sf"/>
</dbReference>
<dbReference type="NCBIfam" id="NF011498">
    <property type="entry name" value="PRK14906.1"/>
    <property type="match status" value="1"/>
</dbReference>
<dbReference type="NCBIfam" id="TIGR02386">
    <property type="entry name" value="rpoC_TIGR"/>
    <property type="match status" value="1"/>
</dbReference>
<dbReference type="PANTHER" id="PTHR19376">
    <property type="entry name" value="DNA-DIRECTED RNA POLYMERASE"/>
    <property type="match status" value="1"/>
</dbReference>
<dbReference type="PANTHER" id="PTHR19376:SF54">
    <property type="entry name" value="DNA-DIRECTED RNA POLYMERASE SUBUNIT BETA"/>
    <property type="match status" value="1"/>
</dbReference>
<dbReference type="Pfam" id="PF04997">
    <property type="entry name" value="RNA_pol_Rpb1_1"/>
    <property type="match status" value="1"/>
</dbReference>
<dbReference type="Pfam" id="PF00623">
    <property type="entry name" value="RNA_pol_Rpb1_2"/>
    <property type="match status" value="2"/>
</dbReference>
<dbReference type="Pfam" id="PF04983">
    <property type="entry name" value="RNA_pol_Rpb1_3"/>
    <property type="match status" value="1"/>
</dbReference>
<dbReference type="Pfam" id="PF05000">
    <property type="entry name" value="RNA_pol_Rpb1_4"/>
    <property type="match status" value="1"/>
</dbReference>
<dbReference type="Pfam" id="PF04998">
    <property type="entry name" value="RNA_pol_Rpb1_5"/>
    <property type="match status" value="1"/>
</dbReference>
<dbReference type="SMART" id="SM00663">
    <property type="entry name" value="RPOLA_N"/>
    <property type="match status" value="1"/>
</dbReference>
<dbReference type="SUPFAM" id="SSF64484">
    <property type="entry name" value="beta and beta-prime subunits of DNA dependent RNA-polymerase"/>
    <property type="match status" value="1"/>
</dbReference>
<sequence length="1185" mass="132512">MWREDLPLIELNNFEALQIGLASPEQIREWSRGEVKKPETINYRTLKPEKDGLFCERIFGPIKDWECHCGKYKRVRYKGIVCDRCGVEVTKSKVRRERMGHIELAAPVSHIWYFKGIPSRMGLILDMSPRSLEKVLYFASYVVLDPKETPLLKKQLLSEKEYRESVDKYGEEAFDAEMGAEAVKKLLAEIDLEQLSKELKEALKTSTGQKKVRTIRRLEVVESFRKSTNRPEWMIIDVIPVIPPDLRPMVQLDGGRFATSDLNDLYRRVINRNNRLKKLLDLGAPDIIVRNEKRMLQEAVDALIDNGRRGRPVTGPGNRPLKSLSDMLKGKQGRFRQNLLGKRVDYSGRSVIVVGPELKMYQCGLPKEMALELFKPFVMKKLVESGAAHNIKSSKKMVERVMPQVWDVLEEVISEHPVLLNRAPTLHRLGIQAFQPVLVEGRAIKLHPLVCTAYNADFDGDQMAVHVPLSVEAQAEARFLMLAANNILKPSDGKPVCVPTQDMILGSYYLTLDKDGVKGEGKIFSNPDEVMMAYQTGAINIHAKIKVRMTKEKDGKIISGIIETTPGKLIFNDSIPQDLGFVDRSNPENEFKLEIDFLVTKKNLGKIIDKCYTKYGATETSTMLDKIKARGYHYSTIGAITISVSDMTVPESKNRLLSDTDLAVEKIEKMYRRGFISEDERYERVIEKWTQTTEDVANALMDNLDRFNPIFMMADSGARGSKSQIKQLAGMRGLMANPSGKIIELPIRASFREGLDVLEYFISTHGARKGNADTALKTADSGYLTRRLVDVSQDVIVREEDCGSTHGYEVSEIKEGNEVIETLTERLTGRYSIEDIVDPQTGEVIVPADTYMNADLAEKVEKHGVKKVNIRSVFTCKSKHGVCAKCYGMNMATANKINIGESVGIVAAQSIGEPGTQLTMRTFHTGGVAGADITQGLPRVEELFEARKPKGLAIITEVAGTVKLEETKKKRIVHVIDDEGVDKSYDIPFGSRIKVSNGSRIEAGDEITEGSVNPHDILAIKGPKEVKNYLLSEVQKVYRLQGVDINDKHLEVVVRQMTRKVKIKESGDTELLPGTLVDVFDFEEVNEKIRQQGGEEATGDIALLGITKAALATDSFLSAASFQETTRVLTDAAIKGKSDPLLGLKENVIIGKLIPAGTGMMRYRSIKLNTDKEENDEELVNVDEA</sequence>